<name>PLCG_CAEEL</name>
<dbReference type="EC" id="3.1.4.11" evidence="7"/>
<dbReference type="EMBL" id="BX284602">
    <property type="protein sequence ID" value="CAA88745.2"/>
    <property type="molecule type" value="Genomic_DNA"/>
</dbReference>
<dbReference type="RefSeq" id="NP_496205.2">
    <property type="nucleotide sequence ID" value="NM_063804.5"/>
</dbReference>
<dbReference type="SMR" id="Q22070"/>
<dbReference type="FunCoup" id="Q22070">
    <property type="interactions" value="2004"/>
</dbReference>
<dbReference type="IntAct" id="Q22070">
    <property type="interactions" value="2"/>
</dbReference>
<dbReference type="STRING" id="6239.T01E8.3.1"/>
<dbReference type="PaxDb" id="6239-T01E8.3"/>
<dbReference type="PeptideAtlas" id="Q22070"/>
<dbReference type="EnsemblMetazoa" id="T01E8.3.1">
    <property type="protein sequence ID" value="T01E8.3.1"/>
    <property type="gene ID" value="WBGene00004038"/>
</dbReference>
<dbReference type="GeneID" id="174586"/>
<dbReference type="KEGG" id="cel:CELE_T01E8.3"/>
<dbReference type="UCSC" id="T01E8.3">
    <property type="organism name" value="c. elegans"/>
</dbReference>
<dbReference type="AGR" id="WB:WBGene00004038"/>
<dbReference type="CTD" id="174586"/>
<dbReference type="WormBase" id="T01E8.3">
    <property type="protein sequence ID" value="CE42905"/>
    <property type="gene ID" value="WBGene00004038"/>
    <property type="gene designation" value="plc-3"/>
</dbReference>
<dbReference type="eggNOG" id="KOG1264">
    <property type="taxonomic scope" value="Eukaryota"/>
</dbReference>
<dbReference type="GeneTree" id="ENSGT00940000169016"/>
<dbReference type="HOGENOM" id="CLU_002738_5_0_1"/>
<dbReference type="InParanoid" id="Q22070"/>
<dbReference type="OMA" id="SLDCYAQ"/>
<dbReference type="OrthoDB" id="269822at2759"/>
<dbReference type="PhylomeDB" id="Q22070"/>
<dbReference type="Reactome" id="R-CEL-1855204">
    <property type="pathway name" value="Synthesis of IP3 and IP4 in the cytosol"/>
</dbReference>
<dbReference type="PRO" id="PR:Q22070"/>
<dbReference type="Proteomes" id="UP000001940">
    <property type="component" value="Chromosome II"/>
</dbReference>
<dbReference type="Bgee" id="WBGene00004038">
    <property type="expression patterns" value="Expressed in pharyngeal muscle cell (C elegans) and 3 other cell types or tissues"/>
</dbReference>
<dbReference type="GO" id="GO:0032587">
    <property type="term" value="C:ruffle membrane"/>
    <property type="evidence" value="ECO:0000318"/>
    <property type="project" value="GO_Central"/>
</dbReference>
<dbReference type="GO" id="GO:0046872">
    <property type="term" value="F:metal ion binding"/>
    <property type="evidence" value="ECO:0007669"/>
    <property type="project" value="UniProtKB-KW"/>
</dbReference>
<dbReference type="GO" id="GO:0004435">
    <property type="term" value="F:phosphatidylinositol-4,5-bisphosphate phospholipase C activity"/>
    <property type="evidence" value="ECO:0000318"/>
    <property type="project" value="GO_Central"/>
</dbReference>
<dbReference type="GO" id="GO:0046488">
    <property type="term" value="P:phosphatidylinositol metabolic process"/>
    <property type="evidence" value="ECO:0000318"/>
    <property type="project" value="GO_Central"/>
</dbReference>
<dbReference type="GO" id="GO:0048015">
    <property type="term" value="P:phosphatidylinositol-mediated signaling"/>
    <property type="evidence" value="ECO:0000318"/>
    <property type="project" value="GO_Central"/>
</dbReference>
<dbReference type="GO" id="GO:0009395">
    <property type="term" value="P:phospholipid catabolic process"/>
    <property type="evidence" value="ECO:0007669"/>
    <property type="project" value="InterPro"/>
</dbReference>
<dbReference type="GO" id="GO:0010634">
    <property type="term" value="P:positive regulation of epithelial cell migration"/>
    <property type="evidence" value="ECO:0000318"/>
    <property type="project" value="GO_Central"/>
</dbReference>
<dbReference type="GO" id="GO:0051209">
    <property type="term" value="P:release of sequestered calcium ion into cytosol"/>
    <property type="evidence" value="ECO:0000318"/>
    <property type="project" value="GO_Central"/>
</dbReference>
<dbReference type="GO" id="GO:0030431">
    <property type="term" value="P:sleep"/>
    <property type="evidence" value="ECO:0000315"/>
    <property type="project" value="WormBase"/>
</dbReference>
<dbReference type="CDD" id="cd00275">
    <property type="entry name" value="C2_PLC_like"/>
    <property type="match status" value="1"/>
</dbReference>
<dbReference type="CDD" id="cd09932">
    <property type="entry name" value="SH2_C-SH2_PLC_gamma_like"/>
    <property type="match status" value="1"/>
</dbReference>
<dbReference type="CDD" id="cd10341">
    <property type="entry name" value="SH2_N-SH2_PLC_gamma_like"/>
    <property type="match status" value="1"/>
</dbReference>
<dbReference type="FunFam" id="2.60.40.150:FF:000199">
    <property type="entry name" value="1-phosphatidylinositol 4,5-bisphosphate phosphodiesterase gamma"/>
    <property type="match status" value="1"/>
</dbReference>
<dbReference type="FunFam" id="3.20.20.190:FF:000062">
    <property type="entry name" value="1-phosphatidylinositol 4,5-bisphosphate phosphodiesterase gamma"/>
    <property type="match status" value="1"/>
</dbReference>
<dbReference type="FunFam" id="3.20.20.190:FF:000063">
    <property type="entry name" value="1-phosphatidylinositol 4,5-bisphosphate phosphodiesterase gamma"/>
    <property type="match status" value="1"/>
</dbReference>
<dbReference type="FunFam" id="3.30.505.10:FF:000011">
    <property type="entry name" value="1-phosphatidylinositol 4,5-bisphosphate phosphodiesterase gamma"/>
    <property type="match status" value="1"/>
</dbReference>
<dbReference type="FunFam" id="3.30.505.10:FF:000098">
    <property type="entry name" value="Phosphoinositide phospholipase C"/>
    <property type="match status" value="1"/>
</dbReference>
<dbReference type="Gene3D" id="2.60.40.150">
    <property type="entry name" value="C2 domain"/>
    <property type="match status" value="1"/>
</dbReference>
<dbReference type="Gene3D" id="3.20.20.190">
    <property type="entry name" value="Phosphatidylinositol (PI) phosphodiesterase"/>
    <property type="match status" value="2"/>
</dbReference>
<dbReference type="Gene3D" id="3.30.505.10">
    <property type="entry name" value="SH2 domain"/>
    <property type="match status" value="2"/>
</dbReference>
<dbReference type="Gene3D" id="2.30.30.40">
    <property type="entry name" value="SH3 Domains"/>
    <property type="match status" value="1"/>
</dbReference>
<dbReference type="InterPro" id="IPR000008">
    <property type="entry name" value="C2_dom"/>
</dbReference>
<dbReference type="InterPro" id="IPR035892">
    <property type="entry name" value="C2_domain_sf"/>
</dbReference>
<dbReference type="InterPro" id="IPR001849">
    <property type="entry name" value="PH_domain"/>
</dbReference>
<dbReference type="InterPro" id="IPR001192">
    <property type="entry name" value="PI-PLC_fam"/>
</dbReference>
<dbReference type="InterPro" id="IPR016279">
    <property type="entry name" value="PLC-gamma"/>
</dbReference>
<dbReference type="InterPro" id="IPR035023">
    <property type="entry name" value="PLC-gamma_C-SH2"/>
</dbReference>
<dbReference type="InterPro" id="IPR035024">
    <property type="entry name" value="PLC-gamma_N-SH2"/>
</dbReference>
<dbReference type="InterPro" id="IPR017946">
    <property type="entry name" value="PLC-like_Pdiesterase_TIM-brl"/>
</dbReference>
<dbReference type="InterPro" id="IPR057061">
    <property type="entry name" value="PLCG_EF-hand_2"/>
</dbReference>
<dbReference type="InterPro" id="IPR000909">
    <property type="entry name" value="PLipase_C_PInositol-sp_X_dom"/>
</dbReference>
<dbReference type="InterPro" id="IPR001711">
    <property type="entry name" value="PLipase_C_Pinositol-sp_Y"/>
</dbReference>
<dbReference type="InterPro" id="IPR000980">
    <property type="entry name" value="SH2"/>
</dbReference>
<dbReference type="InterPro" id="IPR036860">
    <property type="entry name" value="SH2_dom_sf"/>
</dbReference>
<dbReference type="InterPro" id="IPR036028">
    <property type="entry name" value="SH3-like_dom_sf"/>
</dbReference>
<dbReference type="InterPro" id="IPR001452">
    <property type="entry name" value="SH3_domain"/>
</dbReference>
<dbReference type="PANTHER" id="PTHR10336:SF159">
    <property type="entry name" value="1-PHOSPHATIDYLINOSITOL 4,5-BISPHOSPHATE PHOSPHODIESTERASE GAMMA"/>
    <property type="match status" value="1"/>
</dbReference>
<dbReference type="PANTHER" id="PTHR10336">
    <property type="entry name" value="PHOSPHOINOSITIDE-SPECIFIC PHOSPHOLIPASE C FAMILY PROTEIN"/>
    <property type="match status" value="1"/>
</dbReference>
<dbReference type="Pfam" id="PF00168">
    <property type="entry name" value="C2"/>
    <property type="match status" value="1"/>
</dbReference>
<dbReference type="Pfam" id="PF23329">
    <property type="entry name" value="EF_HAND_1_PLCG"/>
    <property type="match status" value="1"/>
</dbReference>
<dbReference type="Pfam" id="PF23583">
    <property type="entry name" value="EF_HAND_2_PLCG"/>
    <property type="match status" value="1"/>
</dbReference>
<dbReference type="Pfam" id="PF00388">
    <property type="entry name" value="PI-PLC-X"/>
    <property type="match status" value="1"/>
</dbReference>
<dbReference type="Pfam" id="PF00387">
    <property type="entry name" value="PI-PLC-Y"/>
    <property type="match status" value="1"/>
</dbReference>
<dbReference type="Pfam" id="PF00017">
    <property type="entry name" value="SH2"/>
    <property type="match status" value="2"/>
</dbReference>
<dbReference type="Pfam" id="PF00018">
    <property type="entry name" value="SH3_1"/>
    <property type="match status" value="1"/>
</dbReference>
<dbReference type="PIRSF" id="PIRSF000952">
    <property type="entry name" value="PLC-gamma"/>
    <property type="match status" value="1"/>
</dbReference>
<dbReference type="PRINTS" id="PR00390">
    <property type="entry name" value="PHPHLIPASEC"/>
</dbReference>
<dbReference type="PRINTS" id="PR00401">
    <property type="entry name" value="SH2DOMAIN"/>
</dbReference>
<dbReference type="SMART" id="SM00239">
    <property type="entry name" value="C2"/>
    <property type="match status" value="1"/>
</dbReference>
<dbReference type="SMART" id="SM00148">
    <property type="entry name" value="PLCXc"/>
    <property type="match status" value="1"/>
</dbReference>
<dbReference type="SMART" id="SM00149">
    <property type="entry name" value="PLCYc"/>
    <property type="match status" value="1"/>
</dbReference>
<dbReference type="SMART" id="SM00252">
    <property type="entry name" value="SH2"/>
    <property type="match status" value="2"/>
</dbReference>
<dbReference type="SMART" id="SM00326">
    <property type="entry name" value="SH3"/>
    <property type="match status" value="1"/>
</dbReference>
<dbReference type="SUPFAM" id="SSF49562">
    <property type="entry name" value="C2 domain (Calcium/lipid-binding domain, CaLB)"/>
    <property type="match status" value="1"/>
</dbReference>
<dbReference type="SUPFAM" id="SSF50729">
    <property type="entry name" value="PH domain-like"/>
    <property type="match status" value="1"/>
</dbReference>
<dbReference type="SUPFAM" id="SSF51695">
    <property type="entry name" value="PLC-like phosphodiesterases"/>
    <property type="match status" value="1"/>
</dbReference>
<dbReference type="SUPFAM" id="SSF55550">
    <property type="entry name" value="SH2 domain"/>
    <property type="match status" value="2"/>
</dbReference>
<dbReference type="SUPFAM" id="SSF50044">
    <property type="entry name" value="SH3-domain"/>
    <property type="match status" value="1"/>
</dbReference>
<dbReference type="PROSITE" id="PS50004">
    <property type="entry name" value="C2"/>
    <property type="match status" value="1"/>
</dbReference>
<dbReference type="PROSITE" id="PS50003">
    <property type="entry name" value="PH_DOMAIN"/>
    <property type="match status" value="1"/>
</dbReference>
<dbReference type="PROSITE" id="PS50007">
    <property type="entry name" value="PIPLC_X_DOMAIN"/>
    <property type="match status" value="1"/>
</dbReference>
<dbReference type="PROSITE" id="PS50008">
    <property type="entry name" value="PIPLC_Y_DOMAIN"/>
    <property type="match status" value="1"/>
</dbReference>
<dbReference type="PROSITE" id="PS50001">
    <property type="entry name" value="SH2"/>
    <property type="match status" value="2"/>
</dbReference>
<dbReference type="PROSITE" id="PS50002">
    <property type="entry name" value="SH3"/>
    <property type="match status" value="1"/>
</dbReference>
<reference evidence="19" key="1">
    <citation type="journal article" date="1998" name="Science">
        <title>Genome sequence of the nematode C. elegans: a platform for investigating biology.</title>
        <authorList>
            <consortium name="The C. elegans sequencing consortium"/>
        </authorList>
    </citation>
    <scope>NUCLEOTIDE SEQUENCE [LARGE SCALE GENOMIC DNA]</scope>
    <source>
        <strain evidence="19">Bristol N2</strain>
    </source>
</reference>
<reference evidence="18" key="2">
    <citation type="journal article" date="2004" name="Mol. Biol. Cell">
        <title>Inositol 1,4,5-trisphosphate signaling regulates rhythmic contractile activity of myoepithelial sheath cells in Caenorhabditis elegans.</title>
        <authorList>
            <person name="Yin X."/>
            <person name="Gower N.J."/>
            <person name="Baylis H.A."/>
            <person name="Strange K."/>
        </authorList>
    </citation>
    <scope>FUNCTION</scope>
    <scope>TISSUE SPECIFICITY</scope>
    <scope>DISRUPTION PHENOTYPE</scope>
</reference>
<reference evidence="18" key="3">
    <citation type="journal article" date="2005" name="J. Gen. Physiol.">
        <title>Oscillatory Ca2+ signaling in the isolated Caenorhabditis elegans intestine: role of the inositol-1,4,5-trisphosphate receptor and phospholipases C beta and gamma.</title>
        <authorList>
            <person name="Espelt M.V."/>
            <person name="Estevez A.Y."/>
            <person name="Yin X."/>
            <person name="Strange K."/>
        </authorList>
    </citation>
    <scope>FUNCTION</scope>
    <scope>TISSUE SPECIFICITY</scope>
    <scope>DISRUPTION PHENOTYPE</scope>
</reference>
<reference evidence="18" key="4">
    <citation type="journal article" date="2005" name="Mol. Biol. Cell">
        <title>Inositol 1,4,5-trisphosphate signaling regulates mating behavior in Caenorhabditis elegans males.</title>
        <authorList>
            <person name="Gower N.J."/>
            <person name="Walker D.S."/>
            <person name="Baylis H.A."/>
        </authorList>
    </citation>
    <scope>TISSUE SPECIFICITY</scope>
</reference>
<reference evidence="18" key="5">
    <citation type="journal article" date="2007" name="Nat. Neurosci.">
        <title>Epidermal growth factor signaling induces behavioral quiescence in Caenorhabditis elegans.</title>
        <authorList>
            <person name="Van Buskirk C."/>
            <person name="Sternberg P.W."/>
        </authorList>
    </citation>
    <scope>FUNCTION</scope>
</reference>
<reference evidence="18" key="6">
    <citation type="journal article" date="2008" name="PLoS Genet.">
        <title>Sensory perception of food and insulin-like signals influence seizure susceptibility.</title>
        <authorList>
            <person name="Gruninger T.R."/>
            <person name="Gualberto D.G."/>
            <person name="Garcia L.R."/>
        </authorList>
    </citation>
    <scope>FUNCTION</scope>
    <scope>TISSUE SPECIFICITY</scope>
    <scope>DISRUPTION PHENOTYPE</scope>
</reference>
<reference evidence="18" key="7">
    <citation type="journal article" date="2008" name="PLoS Genet.">
        <title>Phospholipase C-epsilon regulates epidermal morphogenesis in Caenorhabditis elegans.</title>
        <authorList>
            <person name="Vazquez-Manrique R.P."/>
            <person name="Nagy A.I."/>
            <person name="Legg J.C."/>
            <person name="Bales O.A."/>
            <person name="Ly S."/>
            <person name="Baylis H.A."/>
        </authorList>
    </citation>
    <scope>FUNCTION</scope>
    <scope>DISRUPTION PHENOTYPE</scope>
</reference>
<reference evidence="18" key="8">
    <citation type="journal article" date="2009" name="Cell Host Microbe">
        <title>Antifungal innate immunity in C. elegans: PKCdelta links G protein signaling and a conserved p38 MAPK cascade.</title>
        <authorList>
            <person name="Ziegler K."/>
            <person name="Kurz C.L."/>
            <person name="Cypowyj S."/>
            <person name="Couillault C."/>
            <person name="Pophillat M."/>
            <person name="Pujol N."/>
            <person name="Ewbank J.J."/>
        </authorList>
    </citation>
    <scope>FUNCTION</scope>
    <scope>DISRUPTION PHENOTYPE</scope>
</reference>
<reference evidence="18" key="9">
    <citation type="journal article" date="2009" name="PLoS Genet.">
        <title>Inositol 1,4,5-trisphosphate signalling regulates the avoidance response to nose touch in Caenorhabditis elegans.</title>
        <authorList>
            <person name="Walker D.S."/>
            <person name="Vazquez-Manrique R.P."/>
            <person name="Gower N.J."/>
            <person name="Gregory E."/>
            <person name="Schafer W.R."/>
            <person name="Baylis H.A."/>
        </authorList>
    </citation>
    <scope>FUNCTION</scope>
    <scope>DISRUPTION PHENOTYPE</scope>
</reference>
<reference evidence="18" key="10">
    <citation type="journal article" date="2010" name="Am. J. Physiol.">
        <title>Phosphatidylinositol 4,5-bisphosphate and loss of PLCgamma activity inhibit TRPM channels required for oscillatory Ca2+ signaling.</title>
        <authorList>
            <person name="Xing J."/>
            <person name="Strange K."/>
        </authorList>
    </citation>
    <scope>FUNCTION</scope>
    <scope>DISRUPTION PHENOTYPE</scope>
</reference>
<keyword id="KW-0106">Calcium</keyword>
<keyword id="KW-0378">Hydrolase</keyword>
<keyword id="KW-0442">Lipid degradation</keyword>
<keyword id="KW-0443">Lipid metabolism</keyword>
<keyword id="KW-0479">Metal-binding</keyword>
<keyword id="KW-1185">Reference proteome</keyword>
<keyword id="KW-0677">Repeat</keyword>
<keyword id="KW-0727">SH2 domain</keyword>
<keyword id="KW-0728">SH3 domain</keyword>
<keyword id="KW-0807">Transducer</keyword>
<sequence length="1350" mass="154574">MQHGSLGPSSSSRKTTVTSTAGSVHLHHRSSNGFSTASRAQLNRHNEMDFGKMFAAMEKGHKVCKIAVLKKWDPAYKQLTLDRYSRQIFLTKLELSAVRNKPTILDIRQIREVQTLNYKLNTIKVDDKWKKDREIVNFDSKAILIISYGMGFALSYWILLFESEDACKLWSQGLHNLMMDTRDRDSSPHPLRIERFLHKHFLSLMSPANDAVARKHMKPFVQTSLQFKVQSDQLQQVTEDQMNSDQFSFASRQLIHVPELFSSRFADLAEKHERKGLVVTFQNFLRFLDGKQFDELASNRTRALEFLNRYFQEDQAYFGDRNEPSMTVFEFCDFLFSRENSLWDPTNEKVTHDMSRPLSHYWIASSHNTYLTGDQLRSESSLDCYAQALLMGCRCIELDCWDGQKKPGSAEFIDIVIYHGYTMTSKILLRDVLHVIRHYAFVTSEYPVILSIEDNCSVPAQRLLAQELKDILGDYLLTQPANREEKQLPSPAALKKKIIVKHKKLPIESEDLAAVVKTDEFQDTEIISRECVKKGILMVKNNNSHEWTSHVFILFPDRLCYLIQTADPENPNDDTVSVSGDEEREEETPSGFGVKPEEMHVTEEWFHGRCERDEAKKRILEHKEKGNGLFMIRDSNLFIGDFSLSILHDGKVHHVRIRSKIIDKEKKYYFMDNKVCDTLYELVSYYTRHYLTTAHFKMVLTIPCPQPQPHLNQPWFSATADKEKAEELLSLVPEDGAFLIRTSSTDSSVYVLSLKVDGEFWHYRLKRDGRIFVVNQKVFENLNQIVEFYANREFVRGISLRFPVNEKDISHLTAELAEARTPGCYMDLKDLDKEVQARALRPYRGTADDELSFPANVIITVLRKEEGLWRGRYGSLTGWFPSAHVQEILPEKVSTSETSNYNTIELAGTLIERIHDADRPNVIRISQSNQHWMNKQYYLLAASSSEEADGWQNNLFELTRSVNTKMSILRTKEKEKRIAAELSNLVVYCQAVPFDPAHIYNDAFYEMCSFVEGKLDKLVEKGLLPFNSRKLSRVYPNGSRITSNNYSPVPMWNAGCHMVALNYQTGDKPMQLNQGKFLANGRCGYLLKPDYMLTDDFDPTNTEKFATAYPIRLNVQVIGGRHLSRKDKNKGICSPFVEIEIIGMPCDTKVFQTKTIASNGLNPIWNQTFTFEIQCPEVALIRFHVEDGDFVGPKTDPFIGQAVFPVDSIRCGFRSVPLKNQYSEELELSSLLVDVQMCSREGTQLIRSSSHFLQASRLAPVFAHRKITNGDSIPREMAPRLRTSATDRSLDSPTNSESRATLLSGQRGSQDSMDSAAETSSIASGTISSRDGKKKQNWLKKFSFGKSSKS</sequence>
<gene>
    <name evidence="20" type="primary">plc-3</name>
    <name evidence="20" type="ORF">T01E8.3</name>
</gene>
<comment type="function">
    <text evidence="9 11 12 13 14 15 16 17 18">Mediates the production of the second messenger molecules diacylglycerol (DAG) and inositol 1,4,5-trisphosphate (IP3) which plays an important role in the regulation of intracellular signaling cascades (Probable). Regulates basal and ovulatory sheath cell contractions by controlling Ca(2+) oscillations via IP3-mediated activation of IP3 receptor itr-1 (PubMed:15194811). In intestinal epithelial cells, regulates Ca(2+) oscillations which control posterior body wall muscle contractions required for defecation by IP3-mediated activation of itr-1 and probably by activating TRPM channels gon-2 and gtl-1 by reducing PIP2 levels (PubMed:16186564, PubMed:19923421). By activating tpa-1 via DAG production, required for the expression of antimicrobial peptide nlp-29 in the epidermis in response to fungal infection or physical injury (PubMed:19380113). By triggering Ca(2+) transient via IP3-mediated activation of IPR3 receptor itr-1 in ASH sensory neurons, involved in avoidance behavior in response to nose touch (PubMed:19730689). Probably by regulating neuronal transmission in ALA neurons, mediates the decrease in pharyngeal pumping and locomotion during the quiescent state that precedes each larval molt, downstream of lin-3 and receptor let-23 and upstream of tpa-1 but not itr-1 (PubMed:17891142). During embryogenesis, may play an role in epidermal morphogenesis together with plc-1 (PubMed:18369461). Probably downstream of receptor daf-2, regulates male-sex muscle excitability in the absence of food (PubMed:18604269).</text>
</comment>
<comment type="catalytic activity">
    <reaction evidence="7">
        <text>a 1,2-diacyl-sn-glycero-3-phospho-(1D-myo-inositol-4,5-bisphosphate) + H2O = 1D-myo-inositol 1,4,5-trisphosphate + a 1,2-diacyl-sn-glycerol + H(+)</text>
        <dbReference type="Rhea" id="RHEA:33179"/>
        <dbReference type="ChEBI" id="CHEBI:15377"/>
        <dbReference type="ChEBI" id="CHEBI:15378"/>
        <dbReference type="ChEBI" id="CHEBI:17815"/>
        <dbReference type="ChEBI" id="CHEBI:58456"/>
        <dbReference type="ChEBI" id="CHEBI:203600"/>
        <dbReference type="EC" id="3.1.4.11"/>
    </reaction>
</comment>
<comment type="cofactor">
    <cofactor evidence="18">
        <name>Ca(2+)</name>
        <dbReference type="ChEBI" id="CHEBI:29108"/>
    </cofactor>
</comment>
<comment type="tissue specificity">
    <text evidence="9 10 11 14">Expressed in intestine, isthmus of the pharynx, proximal gonad sheath cells, spermatheca and uterine sheath cells (PubMed:15194811, PubMed:16186564). In males, expressed in the valve cell, the vas deferens and retractor and ventral protactor muscles (PubMed:15958491, PubMed:18604269).</text>
</comment>
<comment type="disruption phenotype">
    <text evidence="9 11 13 14 15 16 17">RNAi-mediated knockdown causes sterility resulting from impaired spermatheca dilatation causing a defect in ovulation, and a severe decrease in sheath cell basal and peak ovulatory contractions (PubMed:15194811, PubMed:18369461). The few embryos laid are arrested at the embryonic stage (PubMed:18369461). Cycles of posterior body wall muscle contractions are prolonged and arrhythmic resulting in a defecation defect (PubMed:16186564). Ca(2+) oscillations in intestinal cells are arrhythmic and the whole cell current amplitude is severely reduced (PubMed:16186564, PubMed:19923421). RNAi-mediated knockdown in males causes an increase in spontaneous muscle seizures in the absence of food in an unc-103 mutant background (PubMed:18604269). Ca(2+) transient increase and avoidance behavior are defective in response to nose touch but not to benzaldehyde (PubMed:19730689). nlp-29 expression is abrogated following fungal infection by D.coniospora and severely reduced following physical injury (PubMed:19380113).</text>
</comment>
<feature type="chain" id="PRO_0000437463" description="1-phosphatidylinositol 4,5-bisphosphate phosphodiesterase gamma plc-3" evidence="18">
    <location>
        <begin position="1"/>
        <end position="1350"/>
    </location>
</feature>
<feature type="domain" description="PI-PLC X-box" evidence="5">
    <location>
        <begin position="352"/>
        <end position="503"/>
    </location>
</feature>
<feature type="domain" description="SH2 1" evidence="3">
    <location>
        <begin position="605"/>
        <end position="704"/>
    </location>
</feature>
<feature type="domain" description="SH2 2" evidence="3">
    <location>
        <begin position="715"/>
        <end position="804"/>
    </location>
</feature>
<feature type="domain" description="SH3" evidence="4">
    <location>
        <begin position="832"/>
        <end position="890"/>
    </location>
</feature>
<feature type="domain" description="PH" evidence="2">
    <location>
        <begin position="855"/>
        <end position="960"/>
    </location>
</feature>
<feature type="domain" description="PI-PLC Y-box" evidence="6">
    <location>
        <begin position="982"/>
        <end position="1092"/>
    </location>
</feature>
<feature type="domain" description="C2" evidence="1">
    <location>
        <begin position="1099"/>
        <end position="1220"/>
    </location>
</feature>
<feature type="region of interest" description="Disordered" evidence="8">
    <location>
        <begin position="1"/>
        <end position="40"/>
    </location>
</feature>
<feature type="region of interest" description="Disordered" evidence="8">
    <location>
        <begin position="570"/>
        <end position="594"/>
    </location>
</feature>
<feature type="region of interest" description="Disordered" evidence="8">
    <location>
        <begin position="1270"/>
        <end position="1350"/>
    </location>
</feature>
<feature type="compositionally biased region" description="Low complexity" evidence="8">
    <location>
        <begin position="9"/>
        <end position="20"/>
    </location>
</feature>
<feature type="compositionally biased region" description="Polar residues" evidence="8">
    <location>
        <begin position="31"/>
        <end position="40"/>
    </location>
</feature>
<feature type="compositionally biased region" description="Polar residues" evidence="8">
    <location>
        <begin position="1283"/>
        <end position="1329"/>
    </location>
</feature>
<feature type="compositionally biased region" description="Low complexity" evidence="8">
    <location>
        <begin position="1340"/>
        <end position="1350"/>
    </location>
</feature>
<feature type="active site" evidence="5">
    <location>
        <position position="367"/>
    </location>
</feature>
<feature type="active site" evidence="5">
    <location>
        <position position="419"/>
    </location>
</feature>
<accession>Q22070</accession>
<evidence type="ECO:0000255" key="1">
    <source>
        <dbReference type="PROSITE-ProRule" id="PRU00041"/>
    </source>
</evidence>
<evidence type="ECO:0000255" key="2">
    <source>
        <dbReference type="PROSITE-ProRule" id="PRU00145"/>
    </source>
</evidence>
<evidence type="ECO:0000255" key="3">
    <source>
        <dbReference type="PROSITE-ProRule" id="PRU00191"/>
    </source>
</evidence>
<evidence type="ECO:0000255" key="4">
    <source>
        <dbReference type="PROSITE-ProRule" id="PRU00192"/>
    </source>
</evidence>
<evidence type="ECO:0000255" key="5">
    <source>
        <dbReference type="PROSITE-ProRule" id="PRU00270"/>
    </source>
</evidence>
<evidence type="ECO:0000255" key="6">
    <source>
        <dbReference type="PROSITE-ProRule" id="PRU00271"/>
    </source>
</evidence>
<evidence type="ECO:0000255" key="7">
    <source>
        <dbReference type="RuleBase" id="RU361133"/>
    </source>
</evidence>
<evidence type="ECO:0000256" key="8">
    <source>
        <dbReference type="SAM" id="MobiDB-lite"/>
    </source>
</evidence>
<evidence type="ECO:0000269" key="9">
    <source>
    </source>
</evidence>
<evidence type="ECO:0000269" key="10">
    <source>
    </source>
</evidence>
<evidence type="ECO:0000269" key="11">
    <source>
    </source>
</evidence>
<evidence type="ECO:0000269" key="12">
    <source>
    </source>
</evidence>
<evidence type="ECO:0000269" key="13">
    <source>
    </source>
</evidence>
<evidence type="ECO:0000269" key="14">
    <source>
    </source>
</evidence>
<evidence type="ECO:0000269" key="15">
    <source>
    </source>
</evidence>
<evidence type="ECO:0000269" key="16">
    <source>
    </source>
</evidence>
<evidence type="ECO:0000269" key="17">
    <source>
    </source>
</evidence>
<evidence type="ECO:0000305" key="18"/>
<evidence type="ECO:0000312" key="19">
    <source>
        <dbReference type="Proteomes" id="UP000001940"/>
    </source>
</evidence>
<evidence type="ECO:0000312" key="20">
    <source>
        <dbReference type="WormBase" id="T01E8.3"/>
    </source>
</evidence>
<proteinExistence type="evidence at transcript level"/>
<organism evidence="19">
    <name type="scientific">Caenorhabditis elegans</name>
    <dbReference type="NCBI Taxonomy" id="6239"/>
    <lineage>
        <taxon>Eukaryota</taxon>
        <taxon>Metazoa</taxon>
        <taxon>Ecdysozoa</taxon>
        <taxon>Nematoda</taxon>
        <taxon>Chromadorea</taxon>
        <taxon>Rhabditida</taxon>
        <taxon>Rhabditina</taxon>
        <taxon>Rhabditomorpha</taxon>
        <taxon>Rhabditoidea</taxon>
        <taxon>Rhabditidae</taxon>
        <taxon>Peloderinae</taxon>
        <taxon>Caenorhabditis</taxon>
    </lineage>
</organism>
<protein>
    <recommendedName>
        <fullName evidence="18">1-phosphatidylinositol 4,5-bisphosphate phosphodiesterase gamma plc-3</fullName>
        <ecNumber evidence="7">3.1.4.11</ecNumber>
    </recommendedName>
    <alternativeName>
        <fullName evidence="18">Phosphoinositide phospholipase C-gamma plc-3</fullName>
    </alternativeName>
    <alternativeName>
        <fullName evidence="18">Phospholipase C-gamma plc-3</fullName>
        <shortName evidence="18">PLC-gamma plc-3</shortName>
    </alternativeName>
</protein>